<proteinExistence type="inferred from homology"/>
<dbReference type="EMBL" id="AP009049">
    <property type="protein sequence ID" value="BAH05253.1"/>
    <property type="molecule type" value="Genomic_DNA"/>
</dbReference>
<dbReference type="RefSeq" id="WP_011988822.1">
    <property type="nucleotide sequence ID" value="NC_011837.1"/>
</dbReference>
<dbReference type="SMR" id="B9DYC8"/>
<dbReference type="KEGG" id="ckr:CKR_0202"/>
<dbReference type="HOGENOM" id="CLU_055188_4_2_9"/>
<dbReference type="Proteomes" id="UP000007969">
    <property type="component" value="Chromosome"/>
</dbReference>
<dbReference type="GO" id="GO:0022625">
    <property type="term" value="C:cytosolic large ribosomal subunit"/>
    <property type="evidence" value="ECO:0007669"/>
    <property type="project" value="TreeGrafter"/>
</dbReference>
<dbReference type="GO" id="GO:0019843">
    <property type="term" value="F:rRNA binding"/>
    <property type="evidence" value="ECO:0007669"/>
    <property type="project" value="UniProtKB-UniRule"/>
</dbReference>
<dbReference type="GO" id="GO:0003735">
    <property type="term" value="F:structural constituent of ribosome"/>
    <property type="evidence" value="ECO:0007669"/>
    <property type="project" value="InterPro"/>
</dbReference>
<dbReference type="GO" id="GO:0006412">
    <property type="term" value="P:translation"/>
    <property type="evidence" value="ECO:0007669"/>
    <property type="project" value="UniProtKB-UniRule"/>
</dbReference>
<dbReference type="Gene3D" id="3.100.10.10">
    <property type="match status" value="1"/>
</dbReference>
<dbReference type="HAMAP" id="MF_01341">
    <property type="entry name" value="Ribosomal_uL15"/>
    <property type="match status" value="1"/>
</dbReference>
<dbReference type="InterPro" id="IPR030878">
    <property type="entry name" value="Ribosomal_uL15"/>
</dbReference>
<dbReference type="InterPro" id="IPR021131">
    <property type="entry name" value="Ribosomal_uL15/eL18"/>
</dbReference>
<dbReference type="InterPro" id="IPR036227">
    <property type="entry name" value="Ribosomal_uL15/eL18_sf"/>
</dbReference>
<dbReference type="InterPro" id="IPR005749">
    <property type="entry name" value="Ribosomal_uL15_bac-type"/>
</dbReference>
<dbReference type="InterPro" id="IPR001196">
    <property type="entry name" value="Ribosomal_uL15_CS"/>
</dbReference>
<dbReference type="NCBIfam" id="TIGR01071">
    <property type="entry name" value="rplO_bact"/>
    <property type="match status" value="1"/>
</dbReference>
<dbReference type="PANTHER" id="PTHR12934">
    <property type="entry name" value="50S RIBOSOMAL PROTEIN L15"/>
    <property type="match status" value="1"/>
</dbReference>
<dbReference type="PANTHER" id="PTHR12934:SF11">
    <property type="entry name" value="LARGE RIBOSOMAL SUBUNIT PROTEIN UL15M"/>
    <property type="match status" value="1"/>
</dbReference>
<dbReference type="Pfam" id="PF00828">
    <property type="entry name" value="Ribosomal_L27A"/>
    <property type="match status" value="1"/>
</dbReference>
<dbReference type="SUPFAM" id="SSF52080">
    <property type="entry name" value="Ribosomal proteins L15p and L18e"/>
    <property type="match status" value="1"/>
</dbReference>
<dbReference type="PROSITE" id="PS00475">
    <property type="entry name" value="RIBOSOMAL_L15"/>
    <property type="match status" value="1"/>
</dbReference>
<protein>
    <recommendedName>
        <fullName evidence="1">Large ribosomal subunit protein uL15</fullName>
    </recommendedName>
    <alternativeName>
        <fullName evidence="3">50S ribosomal protein L15</fullName>
    </alternativeName>
</protein>
<name>RL15_CLOK1</name>
<gene>
    <name evidence="1" type="primary">rplO</name>
    <name type="ordered locus">CKR_0202</name>
</gene>
<keyword id="KW-0687">Ribonucleoprotein</keyword>
<keyword id="KW-0689">Ribosomal protein</keyword>
<keyword id="KW-0694">RNA-binding</keyword>
<keyword id="KW-0699">rRNA-binding</keyword>
<organism>
    <name type="scientific">Clostridium kluyveri (strain NBRC 12016)</name>
    <dbReference type="NCBI Taxonomy" id="583346"/>
    <lineage>
        <taxon>Bacteria</taxon>
        <taxon>Bacillati</taxon>
        <taxon>Bacillota</taxon>
        <taxon>Clostridia</taxon>
        <taxon>Eubacteriales</taxon>
        <taxon>Clostridiaceae</taxon>
        <taxon>Clostridium</taxon>
    </lineage>
</organism>
<evidence type="ECO:0000255" key="1">
    <source>
        <dbReference type="HAMAP-Rule" id="MF_01341"/>
    </source>
</evidence>
<evidence type="ECO:0000256" key="2">
    <source>
        <dbReference type="SAM" id="MobiDB-lite"/>
    </source>
</evidence>
<evidence type="ECO:0000305" key="3"/>
<comment type="function">
    <text evidence="1">Binds to the 23S rRNA.</text>
</comment>
<comment type="subunit">
    <text evidence="1">Part of the 50S ribosomal subunit.</text>
</comment>
<comment type="similarity">
    <text evidence="1">Belongs to the universal ribosomal protein uL15 family.</text>
</comment>
<accession>B9DYC8</accession>
<feature type="chain" id="PRO_1000166286" description="Large ribosomal subunit protein uL15">
    <location>
        <begin position="1"/>
        <end position="146"/>
    </location>
</feature>
<feature type="region of interest" description="Disordered" evidence="2">
    <location>
        <begin position="1"/>
        <end position="47"/>
    </location>
</feature>
<feature type="compositionally biased region" description="Basic and acidic residues" evidence="2">
    <location>
        <begin position="1"/>
        <end position="13"/>
    </location>
</feature>
<feature type="compositionally biased region" description="Gly residues" evidence="2">
    <location>
        <begin position="21"/>
        <end position="31"/>
    </location>
</feature>
<reference key="1">
    <citation type="submission" date="2005-09" db="EMBL/GenBank/DDBJ databases">
        <title>Complete genome sequence of Clostridium kluyveri and comparative genomics of Clostridia species.</title>
        <authorList>
            <person name="Inui M."/>
            <person name="Nonaka H."/>
            <person name="Shinoda Y."/>
            <person name="Ikenaga Y."/>
            <person name="Abe M."/>
            <person name="Naito K."/>
            <person name="Vertes A.A."/>
            <person name="Yukawa H."/>
        </authorList>
    </citation>
    <scope>NUCLEOTIDE SEQUENCE [LARGE SCALE GENOMIC DNA]</scope>
    <source>
        <strain>NBRC 12016</strain>
    </source>
</reference>
<sequence length="146" mass="15976">MKLHELKPAEGSRKSRKRIGRGTGSGLGRNAGKGEKGQKARAGGGVRIGFEGGQMPLYRRVPKRGFTNIFAKQYSELNVERLNIFEDGTEITPELLIEKRMIRKSKDGLKILGNGELQKKLTVKAVKFTKAAAQKIEAAGGKVEVI</sequence>